<name>NUOB_RICRO</name>
<feature type="chain" id="PRO_0000358475" description="NADH-quinone oxidoreductase subunit B">
    <location>
        <begin position="1"/>
        <end position="174"/>
    </location>
</feature>
<feature type="binding site" evidence="2">
    <location>
        <position position="47"/>
    </location>
    <ligand>
        <name>[4Fe-4S] cluster</name>
        <dbReference type="ChEBI" id="CHEBI:49883"/>
    </ligand>
</feature>
<feature type="binding site" evidence="2">
    <location>
        <position position="48"/>
    </location>
    <ligand>
        <name>[4Fe-4S] cluster</name>
        <dbReference type="ChEBI" id="CHEBI:49883"/>
    </ligand>
</feature>
<feature type="binding site" evidence="2">
    <location>
        <position position="112"/>
    </location>
    <ligand>
        <name>[4Fe-4S] cluster</name>
        <dbReference type="ChEBI" id="CHEBI:49883"/>
    </ligand>
</feature>
<feature type="binding site" evidence="2">
    <location>
        <position position="142"/>
    </location>
    <ligand>
        <name>[4Fe-4S] cluster</name>
        <dbReference type="ChEBI" id="CHEBI:49883"/>
    </ligand>
</feature>
<keyword id="KW-0004">4Fe-4S</keyword>
<keyword id="KW-0997">Cell inner membrane</keyword>
<keyword id="KW-1003">Cell membrane</keyword>
<keyword id="KW-0408">Iron</keyword>
<keyword id="KW-0411">Iron-sulfur</keyword>
<keyword id="KW-0472">Membrane</keyword>
<keyword id="KW-0479">Metal-binding</keyword>
<keyword id="KW-0520">NAD</keyword>
<keyword id="KW-0874">Quinone</keyword>
<keyword id="KW-1278">Translocase</keyword>
<keyword id="KW-0813">Transport</keyword>
<keyword id="KW-0830">Ubiquinone</keyword>
<organism>
    <name type="scientific">Rickettsia rickettsii (strain Iowa)</name>
    <dbReference type="NCBI Taxonomy" id="452659"/>
    <lineage>
        <taxon>Bacteria</taxon>
        <taxon>Pseudomonadati</taxon>
        <taxon>Pseudomonadota</taxon>
        <taxon>Alphaproteobacteria</taxon>
        <taxon>Rickettsiales</taxon>
        <taxon>Rickettsiaceae</taxon>
        <taxon>Rickettsieae</taxon>
        <taxon>Rickettsia</taxon>
        <taxon>spotted fever group</taxon>
    </lineage>
</organism>
<dbReference type="EC" id="7.1.1.-" evidence="2"/>
<dbReference type="EMBL" id="CP000766">
    <property type="protein sequence ID" value="ABY72449.1"/>
    <property type="molecule type" value="Genomic_DNA"/>
</dbReference>
<dbReference type="RefSeq" id="WP_004995988.1">
    <property type="nucleotide sequence ID" value="NC_010263.3"/>
</dbReference>
<dbReference type="SMR" id="B0BX73"/>
<dbReference type="KEGG" id="rrj:RrIowa_0578"/>
<dbReference type="eggNOG" id="COG0377">
    <property type="taxonomic scope" value="Bacteria"/>
</dbReference>
<dbReference type="HOGENOM" id="CLU_055737_7_3_5"/>
<dbReference type="Proteomes" id="UP000000796">
    <property type="component" value="Chromosome"/>
</dbReference>
<dbReference type="GO" id="GO:0005886">
    <property type="term" value="C:plasma membrane"/>
    <property type="evidence" value="ECO:0007669"/>
    <property type="project" value="UniProtKB-SubCell"/>
</dbReference>
<dbReference type="GO" id="GO:0045271">
    <property type="term" value="C:respiratory chain complex I"/>
    <property type="evidence" value="ECO:0007669"/>
    <property type="project" value="TreeGrafter"/>
</dbReference>
<dbReference type="GO" id="GO:0051539">
    <property type="term" value="F:4 iron, 4 sulfur cluster binding"/>
    <property type="evidence" value="ECO:0007669"/>
    <property type="project" value="UniProtKB-KW"/>
</dbReference>
<dbReference type="GO" id="GO:0005506">
    <property type="term" value="F:iron ion binding"/>
    <property type="evidence" value="ECO:0007669"/>
    <property type="project" value="UniProtKB-UniRule"/>
</dbReference>
<dbReference type="GO" id="GO:0008137">
    <property type="term" value="F:NADH dehydrogenase (ubiquinone) activity"/>
    <property type="evidence" value="ECO:0007669"/>
    <property type="project" value="InterPro"/>
</dbReference>
<dbReference type="GO" id="GO:0050136">
    <property type="term" value="F:NADH:ubiquinone reductase (non-electrogenic) activity"/>
    <property type="evidence" value="ECO:0007669"/>
    <property type="project" value="UniProtKB-UniRule"/>
</dbReference>
<dbReference type="GO" id="GO:0048038">
    <property type="term" value="F:quinone binding"/>
    <property type="evidence" value="ECO:0007669"/>
    <property type="project" value="UniProtKB-KW"/>
</dbReference>
<dbReference type="GO" id="GO:0009060">
    <property type="term" value="P:aerobic respiration"/>
    <property type="evidence" value="ECO:0007669"/>
    <property type="project" value="TreeGrafter"/>
</dbReference>
<dbReference type="GO" id="GO:0015990">
    <property type="term" value="P:electron transport coupled proton transport"/>
    <property type="evidence" value="ECO:0007669"/>
    <property type="project" value="TreeGrafter"/>
</dbReference>
<dbReference type="FunFam" id="3.40.50.12280:FF:000001">
    <property type="entry name" value="NADH-quinone oxidoreductase subunit B 2"/>
    <property type="match status" value="1"/>
</dbReference>
<dbReference type="Gene3D" id="3.40.50.12280">
    <property type="match status" value="1"/>
</dbReference>
<dbReference type="HAMAP" id="MF_01356">
    <property type="entry name" value="NDH1_NuoB"/>
    <property type="match status" value="1"/>
</dbReference>
<dbReference type="InterPro" id="IPR006137">
    <property type="entry name" value="NADH_UbQ_OxRdtase-like_20kDa"/>
</dbReference>
<dbReference type="InterPro" id="IPR006138">
    <property type="entry name" value="NADH_UQ_OxRdtase_20Kd_su"/>
</dbReference>
<dbReference type="NCBIfam" id="TIGR01957">
    <property type="entry name" value="nuoB_fam"/>
    <property type="match status" value="1"/>
</dbReference>
<dbReference type="NCBIfam" id="NF005012">
    <property type="entry name" value="PRK06411.1"/>
    <property type="match status" value="1"/>
</dbReference>
<dbReference type="PANTHER" id="PTHR11995">
    <property type="entry name" value="NADH DEHYDROGENASE"/>
    <property type="match status" value="1"/>
</dbReference>
<dbReference type="PANTHER" id="PTHR11995:SF14">
    <property type="entry name" value="NADH DEHYDROGENASE [UBIQUINONE] IRON-SULFUR PROTEIN 7, MITOCHONDRIAL"/>
    <property type="match status" value="1"/>
</dbReference>
<dbReference type="Pfam" id="PF01058">
    <property type="entry name" value="Oxidored_q6"/>
    <property type="match status" value="1"/>
</dbReference>
<dbReference type="SUPFAM" id="SSF56770">
    <property type="entry name" value="HydA/Nqo6-like"/>
    <property type="match status" value="1"/>
</dbReference>
<dbReference type="PROSITE" id="PS01150">
    <property type="entry name" value="COMPLEX1_20K"/>
    <property type="match status" value="1"/>
</dbReference>
<gene>
    <name evidence="2" type="primary">nuoB</name>
    <name type="ordered locus">RrIowa_0578</name>
</gene>
<accession>B0BX73</accession>
<reference key="1">
    <citation type="journal article" date="2008" name="Infect. Immun.">
        <title>Genomic comparison of virulent Rickettsia rickettsii Sheila Smith and avirulent Rickettsia rickettsii Iowa.</title>
        <authorList>
            <person name="Ellison D.W."/>
            <person name="Clark T.R."/>
            <person name="Sturdevant D.E."/>
            <person name="Virtaneva K."/>
            <person name="Porcella S.F."/>
            <person name="Hackstadt T."/>
        </authorList>
    </citation>
    <scope>NUCLEOTIDE SEQUENCE [LARGE SCALE GENOMIC DNA]</scope>
    <source>
        <strain>Iowa</strain>
    </source>
</reference>
<proteinExistence type="inferred from homology"/>
<evidence type="ECO:0000250" key="1"/>
<evidence type="ECO:0000255" key="2">
    <source>
        <dbReference type="HAMAP-Rule" id="MF_01356"/>
    </source>
</evidence>
<protein>
    <recommendedName>
        <fullName evidence="2">NADH-quinone oxidoreductase subunit B</fullName>
        <ecNumber evidence="2">7.1.1.-</ecNumber>
    </recommendedName>
    <alternativeName>
        <fullName evidence="2">NADH dehydrogenase I subunit B</fullName>
    </alternativeName>
    <alternativeName>
        <fullName evidence="2">NDH-1 subunit B</fullName>
    </alternativeName>
</protein>
<sequence length="174" mass="19616">MKNNFYQEDELLSNELSNRGFLLTKVDDVIGWARANSLWPMTFGLACCAVEMMQAAASRYDMDRFGMLFRPSPRQSDLMIVAGTLTNKMAPALRKVYDQMAEPKWVLSMGSCANGGGYYHFSYSVVRGCDRIVPVDVYVPGCPPTAEALIYGLMQLQKKIKRTTGFKYDARQTH</sequence>
<comment type="function">
    <text evidence="1">NDH-1 shuttles electrons from NADH, via FMN and iron-sulfur (Fe-S) centers, to quinones in the respiratory chain. Couples the redox reaction to proton translocation (for every two electrons transferred, four hydrogen ions are translocated across the cytoplasmic membrane), and thus conserves the redox energy in a proton gradient (By similarity).</text>
</comment>
<comment type="catalytic activity">
    <reaction evidence="2">
        <text>a quinone + NADH + 5 H(+)(in) = a quinol + NAD(+) + 4 H(+)(out)</text>
        <dbReference type="Rhea" id="RHEA:57888"/>
        <dbReference type="ChEBI" id="CHEBI:15378"/>
        <dbReference type="ChEBI" id="CHEBI:24646"/>
        <dbReference type="ChEBI" id="CHEBI:57540"/>
        <dbReference type="ChEBI" id="CHEBI:57945"/>
        <dbReference type="ChEBI" id="CHEBI:132124"/>
    </reaction>
</comment>
<comment type="cofactor">
    <cofactor evidence="2">
        <name>[4Fe-4S] cluster</name>
        <dbReference type="ChEBI" id="CHEBI:49883"/>
    </cofactor>
    <text evidence="2">Binds 1 [4Fe-4S] cluster.</text>
</comment>
<comment type="subunit">
    <text evidence="2">NDH-1 is composed of 14 different subunits. Subunits NuoB, C, D, E, F, and G constitute the peripheral sector of the complex.</text>
</comment>
<comment type="subcellular location">
    <subcellularLocation>
        <location evidence="2">Cell inner membrane</location>
        <topology evidence="2">Peripheral membrane protein</topology>
        <orientation evidence="2">Cytoplasmic side</orientation>
    </subcellularLocation>
</comment>
<comment type="similarity">
    <text evidence="2">Belongs to the complex I 20 kDa subunit family.</text>
</comment>